<sequence length="447" mass="48815">MNKNTWVIGFTLFAMFFGAGNLIFPPNLGLDSGQFFWPAILAFVLTGIGLPLLGVIVGALDKEGYIGALNKISPKFSILFLIIIYLTIGPLFAIPRTASTSFEMTITPIIHSNSSIALFIFTIIYFIVVLYICLNPSKLIDRIGSLLTPLLLITILAMIIKGYLDFSGNSAGKGNEALYHSNFSSFAEGFTQGYLTMDAIAAIAFSMIVVNAVKLTGITKTNQIFKQTLTAGLIAAVALIFIYISLGYIGNHMPVSDMTLDQLKSKDRNIGTYLLTTMASTGFGSFGKYLLGIIVALACLTTACGLIVAVSEYFHRIVPKVSYKAFVLVFILMSFIIANQGLNAVISMSIPVLSIVYPVAITVVLLILIAKFIPTKRISQQIPVIIVFILSIFSVISKLGWLKINFIESLPLRAYSLEWFPVAIIATILGYLVGIFVKQDPIKYQQE</sequence>
<keyword id="KW-0029">Amino-acid transport</keyword>
<keyword id="KW-1003">Cell membrane</keyword>
<keyword id="KW-0472">Membrane</keyword>
<keyword id="KW-0812">Transmembrane</keyword>
<keyword id="KW-1133">Transmembrane helix</keyword>
<keyword id="KW-0813">Transport</keyword>
<reference key="1">
    <citation type="journal article" date="2005" name="J. Bacteriol.">
        <title>Insights on evolution of virulence and resistance from the complete genome analysis of an early methicillin-resistant Staphylococcus aureus strain and a biofilm-producing methicillin-resistant Staphylococcus epidermidis strain.</title>
        <authorList>
            <person name="Gill S.R."/>
            <person name="Fouts D.E."/>
            <person name="Archer G.L."/>
            <person name="Mongodin E.F."/>
            <person name="DeBoy R.T."/>
            <person name="Ravel J."/>
            <person name="Paulsen I.T."/>
            <person name="Kolonay J.F."/>
            <person name="Brinkac L.M."/>
            <person name="Beanan M.J."/>
            <person name="Dodson R.J."/>
            <person name="Daugherty S.C."/>
            <person name="Madupu R."/>
            <person name="Angiuoli S.V."/>
            <person name="Durkin A.S."/>
            <person name="Haft D.H."/>
            <person name="Vamathevan J.J."/>
            <person name="Khouri H."/>
            <person name="Utterback T.R."/>
            <person name="Lee C."/>
            <person name="Dimitrov G."/>
            <person name="Jiang L."/>
            <person name="Qin H."/>
            <person name="Weidman J."/>
            <person name="Tran K."/>
            <person name="Kang K.H."/>
            <person name="Hance I.R."/>
            <person name="Nelson K.E."/>
            <person name="Fraser C.M."/>
        </authorList>
    </citation>
    <scope>NUCLEOTIDE SEQUENCE [LARGE SCALE GENOMIC DNA]</scope>
    <source>
        <strain>COL</strain>
    </source>
</reference>
<protein>
    <recommendedName>
        <fullName>Putative branched-chain amino acid carrier protein SACOL1443</fullName>
    </recommendedName>
</protein>
<gene>
    <name type="ordered locus">SACOL1443</name>
</gene>
<evidence type="ECO:0000250" key="1"/>
<evidence type="ECO:0000255" key="2"/>
<evidence type="ECO:0000305" key="3"/>
<comment type="function">
    <text evidence="1 3">Component of the transport system for branched-chain amino acids (leucine, isoleucine and valine), which is coupled to a proton motive force (Potential). Contributes to NaCl tolerance (By similarity).</text>
</comment>
<comment type="subcellular location">
    <subcellularLocation>
        <location evidence="3">Cell membrane</location>
        <topology evidence="3">Multi-pass membrane protein</topology>
    </subcellularLocation>
</comment>
<comment type="similarity">
    <text evidence="3">Belongs to the branched chain amino acid transporter family.</text>
</comment>
<feature type="chain" id="PRO_0000294012" description="Putative branched-chain amino acid carrier protein SACOL1443">
    <location>
        <begin position="1"/>
        <end position="447"/>
    </location>
</feature>
<feature type="transmembrane region" description="Helical" evidence="2">
    <location>
        <begin position="6"/>
        <end position="26"/>
    </location>
</feature>
<feature type="transmembrane region" description="Helical" evidence="2">
    <location>
        <begin position="40"/>
        <end position="60"/>
    </location>
</feature>
<feature type="transmembrane region" description="Helical" evidence="2">
    <location>
        <begin position="74"/>
        <end position="94"/>
    </location>
</feature>
<feature type="transmembrane region" description="Helical" evidence="2">
    <location>
        <begin position="114"/>
        <end position="134"/>
    </location>
</feature>
<feature type="transmembrane region" description="Helical" evidence="2">
    <location>
        <begin position="143"/>
        <end position="163"/>
    </location>
</feature>
<feature type="transmembrane region" description="Helical" evidence="2">
    <location>
        <begin position="193"/>
        <end position="213"/>
    </location>
</feature>
<feature type="transmembrane region" description="Helical" evidence="2">
    <location>
        <begin position="229"/>
        <end position="249"/>
    </location>
</feature>
<feature type="transmembrane region" description="Helical" evidence="2">
    <location>
        <begin position="290"/>
        <end position="310"/>
    </location>
</feature>
<feature type="transmembrane region" description="Helical" evidence="2">
    <location>
        <begin position="326"/>
        <end position="346"/>
    </location>
</feature>
<feature type="transmembrane region" description="Helical" evidence="2">
    <location>
        <begin position="350"/>
        <end position="370"/>
    </location>
</feature>
<feature type="transmembrane region" description="Helical" evidence="2">
    <location>
        <begin position="382"/>
        <end position="402"/>
    </location>
</feature>
<feature type="transmembrane region" description="Helical" evidence="2">
    <location>
        <begin position="417"/>
        <end position="437"/>
    </location>
</feature>
<accession>Q5HG12</accession>
<organism>
    <name type="scientific">Staphylococcus aureus (strain COL)</name>
    <dbReference type="NCBI Taxonomy" id="93062"/>
    <lineage>
        <taxon>Bacteria</taxon>
        <taxon>Bacillati</taxon>
        <taxon>Bacillota</taxon>
        <taxon>Bacilli</taxon>
        <taxon>Bacillales</taxon>
        <taxon>Staphylococcaceae</taxon>
        <taxon>Staphylococcus</taxon>
    </lineage>
</organism>
<name>BRNQL_STAAC</name>
<dbReference type="EMBL" id="CP000046">
    <property type="protein sequence ID" value="AAW38188.1"/>
    <property type="molecule type" value="Genomic_DNA"/>
</dbReference>
<dbReference type="KEGG" id="sac:SACOL1443"/>
<dbReference type="HOGENOM" id="CLU_036807_0_1_9"/>
<dbReference type="Proteomes" id="UP000000530">
    <property type="component" value="Chromosome"/>
</dbReference>
<dbReference type="GO" id="GO:0005886">
    <property type="term" value="C:plasma membrane"/>
    <property type="evidence" value="ECO:0007669"/>
    <property type="project" value="UniProtKB-SubCell"/>
</dbReference>
<dbReference type="GO" id="GO:0015188">
    <property type="term" value="F:L-isoleucine transmembrane transporter activity"/>
    <property type="evidence" value="ECO:0007669"/>
    <property type="project" value="TreeGrafter"/>
</dbReference>
<dbReference type="GO" id="GO:0015190">
    <property type="term" value="F:L-leucine transmembrane transporter activity"/>
    <property type="evidence" value="ECO:0007669"/>
    <property type="project" value="TreeGrafter"/>
</dbReference>
<dbReference type="GO" id="GO:0005304">
    <property type="term" value="F:L-valine transmembrane transporter activity"/>
    <property type="evidence" value="ECO:0007669"/>
    <property type="project" value="TreeGrafter"/>
</dbReference>
<dbReference type="GO" id="GO:0015818">
    <property type="term" value="P:isoleucine transport"/>
    <property type="evidence" value="ECO:0007669"/>
    <property type="project" value="TreeGrafter"/>
</dbReference>
<dbReference type="GO" id="GO:0015820">
    <property type="term" value="P:L-leucine transport"/>
    <property type="evidence" value="ECO:0007669"/>
    <property type="project" value="TreeGrafter"/>
</dbReference>
<dbReference type="FunFam" id="1.20.1740.10:FF:000068">
    <property type="entry name" value="Branched-chain amino acid transport system carrier protein"/>
    <property type="match status" value="1"/>
</dbReference>
<dbReference type="Gene3D" id="1.20.1740.10">
    <property type="entry name" value="Amino acid/polyamine transporter I"/>
    <property type="match status" value="1"/>
</dbReference>
<dbReference type="InterPro" id="IPR004685">
    <property type="entry name" value="Brnchd-chn_aa_trnsp_Livcs"/>
</dbReference>
<dbReference type="NCBIfam" id="TIGR00796">
    <property type="entry name" value="livcs"/>
    <property type="match status" value="1"/>
</dbReference>
<dbReference type="PANTHER" id="PTHR30588:SF7">
    <property type="entry name" value="BRANCHED-CHAIN AMINO ACID CARRIER PROTEIN SAOUHSC_01411-RELATED"/>
    <property type="match status" value="1"/>
</dbReference>
<dbReference type="PANTHER" id="PTHR30588">
    <property type="entry name" value="BRANCHED-CHAIN AMINO ACID TRANSPORT SYSTEM 2 CARRIER PROTEIN"/>
    <property type="match status" value="1"/>
</dbReference>
<dbReference type="Pfam" id="PF05525">
    <property type="entry name" value="Branch_AA_trans"/>
    <property type="match status" value="1"/>
</dbReference>
<proteinExistence type="inferred from homology"/>